<reference key="1">
    <citation type="journal article" date="2001" name="Proc. Natl. Acad. Sci. U.S.A.">
        <title>Complete genome sequence of an M1 strain of Streptococcus pyogenes.</title>
        <authorList>
            <person name="Ferretti J.J."/>
            <person name="McShan W.M."/>
            <person name="Ajdic D.J."/>
            <person name="Savic D.J."/>
            <person name="Savic G."/>
            <person name="Lyon K."/>
            <person name="Primeaux C."/>
            <person name="Sezate S."/>
            <person name="Suvorov A.N."/>
            <person name="Kenton S."/>
            <person name="Lai H.S."/>
            <person name="Lin S.P."/>
            <person name="Qian Y."/>
            <person name="Jia H.G."/>
            <person name="Najar F.Z."/>
            <person name="Ren Q."/>
            <person name="Zhu H."/>
            <person name="Song L."/>
            <person name="White J."/>
            <person name="Yuan X."/>
            <person name="Clifton S.W."/>
            <person name="Roe B.A."/>
            <person name="McLaughlin R.E."/>
        </authorList>
    </citation>
    <scope>NUCLEOTIDE SEQUENCE [LARGE SCALE GENOMIC DNA]</scope>
    <source>
        <strain>ATCC 700294 / SF370 / Serotype M1</strain>
    </source>
</reference>
<reference key="2">
    <citation type="journal article" date="2005" name="J. Infect. Dis.">
        <title>Evolutionary origin and emergence of a highly successful clone of serotype M1 group A Streptococcus involved multiple horizontal gene transfer events.</title>
        <authorList>
            <person name="Sumby P."/>
            <person name="Porcella S.F."/>
            <person name="Madrigal A.G."/>
            <person name="Barbian K.D."/>
            <person name="Virtaneva K."/>
            <person name="Ricklefs S.M."/>
            <person name="Sturdevant D.E."/>
            <person name="Graham M.R."/>
            <person name="Vuopio-Varkila J."/>
            <person name="Hoe N.P."/>
            <person name="Musser J.M."/>
        </authorList>
    </citation>
    <scope>NUCLEOTIDE SEQUENCE [LARGE SCALE GENOMIC DNA]</scope>
    <source>
        <strain>ATCC BAA-947 / MGAS5005 / Serotype M1</strain>
    </source>
</reference>
<name>MSRA_STRP1</name>
<proteinExistence type="inferred from homology"/>
<accession>Q9A149</accession>
<accession>Q490G8</accession>
<sequence>MERAIFAGGCFWCMVQPFEEQAGILSVRSGYTGGHLPNPSYEQVCAKTTGHTEAVEIIFDPKQIAYKDLVELYWTQTDPTDAFGQFEDRGDNYRPVIYYTTERQKEIAEQSKANLQASGRFDQPIVTTIEPAEPFYLAEDYHQGFYKKNPKRYAQSSAIRHQFLEENWS</sequence>
<organism>
    <name type="scientific">Streptococcus pyogenes serotype M1</name>
    <dbReference type="NCBI Taxonomy" id="301447"/>
    <lineage>
        <taxon>Bacteria</taxon>
        <taxon>Bacillati</taxon>
        <taxon>Bacillota</taxon>
        <taxon>Bacilli</taxon>
        <taxon>Lactobacillales</taxon>
        <taxon>Streptococcaceae</taxon>
        <taxon>Streptococcus</taxon>
    </lineage>
</organism>
<dbReference type="EC" id="1.8.4.11" evidence="1"/>
<dbReference type="EMBL" id="AE004092">
    <property type="protein sequence ID" value="AAK33479.1"/>
    <property type="molecule type" value="Genomic_DNA"/>
</dbReference>
<dbReference type="EMBL" id="CP000017">
    <property type="protein sequence ID" value="AAZ51000.1"/>
    <property type="molecule type" value="Genomic_DNA"/>
</dbReference>
<dbReference type="RefSeq" id="NP_268758.1">
    <property type="nucleotide sequence ID" value="NC_002737.2"/>
</dbReference>
<dbReference type="SMR" id="Q9A149"/>
<dbReference type="PaxDb" id="1314-HKU360_00411"/>
<dbReference type="KEGG" id="spy:SPy_0466"/>
<dbReference type="KEGG" id="spz:M5005_Spy0382"/>
<dbReference type="PATRIC" id="fig|160490.10.peg.393"/>
<dbReference type="HOGENOM" id="CLU_031040_10_1_9"/>
<dbReference type="OMA" id="FWCLEHD"/>
<dbReference type="Proteomes" id="UP000000750">
    <property type="component" value="Chromosome"/>
</dbReference>
<dbReference type="GO" id="GO:0033744">
    <property type="term" value="F:L-methionine:thioredoxin-disulfide S-oxidoreductase activity"/>
    <property type="evidence" value="ECO:0007669"/>
    <property type="project" value="RHEA"/>
</dbReference>
<dbReference type="GO" id="GO:0008113">
    <property type="term" value="F:peptide-methionine (S)-S-oxide reductase activity"/>
    <property type="evidence" value="ECO:0007669"/>
    <property type="project" value="UniProtKB-UniRule"/>
</dbReference>
<dbReference type="GO" id="GO:0036211">
    <property type="term" value="P:protein modification process"/>
    <property type="evidence" value="ECO:0007669"/>
    <property type="project" value="UniProtKB-UniRule"/>
</dbReference>
<dbReference type="Gene3D" id="3.30.1060.10">
    <property type="entry name" value="Peptide methionine sulphoxide reductase MsrA"/>
    <property type="match status" value="1"/>
</dbReference>
<dbReference type="HAMAP" id="MF_01401">
    <property type="entry name" value="MsrA"/>
    <property type="match status" value="1"/>
</dbReference>
<dbReference type="InterPro" id="IPR002569">
    <property type="entry name" value="Met_Sox_Rdtase_MsrA_dom"/>
</dbReference>
<dbReference type="InterPro" id="IPR036509">
    <property type="entry name" value="Met_Sox_Rdtase_MsrA_sf"/>
</dbReference>
<dbReference type="NCBIfam" id="TIGR00401">
    <property type="entry name" value="msrA"/>
    <property type="match status" value="1"/>
</dbReference>
<dbReference type="PANTHER" id="PTHR43774">
    <property type="entry name" value="PEPTIDE METHIONINE SULFOXIDE REDUCTASE"/>
    <property type="match status" value="1"/>
</dbReference>
<dbReference type="PANTHER" id="PTHR43774:SF1">
    <property type="entry name" value="PEPTIDE METHIONINE SULFOXIDE REDUCTASE MSRA 2"/>
    <property type="match status" value="1"/>
</dbReference>
<dbReference type="Pfam" id="PF01625">
    <property type="entry name" value="PMSR"/>
    <property type="match status" value="1"/>
</dbReference>
<dbReference type="SUPFAM" id="SSF55068">
    <property type="entry name" value="Peptide methionine sulfoxide reductase"/>
    <property type="match status" value="1"/>
</dbReference>
<feature type="chain" id="PRO_0000138597" description="Peptide methionine sulfoxide reductase MsrA">
    <location>
        <begin position="1"/>
        <end position="169"/>
    </location>
</feature>
<feature type="active site" evidence="1">
    <location>
        <position position="10"/>
    </location>
</feature>
<keyword id="KW-0560">Oxidoreductase</keyword>
<keyword id="KW-1185">Reference proteome</keyword>
<protein>
    <recommendedName>
        <fullName evidence="1">Peptide methionine sulfoxide reductase MsrA</fullName>
        <shortName evidence="1">Protein-methionine-S-oxide reductase</shortName>
        <ecNumber evidence="1">1.8.4.11</ecNumber>
    </recommendedName>
    <alternativeName>
        <fullName evidence="1">Peptide-methionine (S)-S-oxide reductase</fullName>
        <shortName evidence="1">Peptide Met(O) reductase</shortName>
    </alternativeName>
</protein>
<gene>
    <name evidence="1" type="primary">msrA</name>
    <name type="synonym">msrA.2</name>
    <name type="ordered locus">SPy_0466</name>
    <name type="ordered locus">M5005_Spy0382</name>
</gene>
<evidence type="ECO:0000255" key="1">
    <source>
        <dbReference type="HAMAP-Rule" id="MF_01401"/>
    </source>
</evidence>
<comment type="function">
    <text evidence="1">Has an important function as a repair enzyme for proteins that have been inactivated by oxidation. Catalyzes the reversible oxidation-reduction of methionine sulfoxide in proteins to methionine.</text>
</comment>
<comment type="catalytic activity">
    <reaction evidence="1">
        <text>L-methionyl-[protein] + [thioredoxin]-disulfide + H2O = L-methionyl-(S)-S-oxide-[protein] + [thioredoxin]-dithiol</text>
        <dbReference type="Rhea" id="RHEA:14217"/>
        <dbReference type="Rhea" id="RHEA-COMP:10698"/>
        <dbReference type="Rhea" id="RHEA-COMP:10700"/>
        <dbReference type="Rhea" id="RHEA-COMP:12313"/>
        <dbReference type="Rhea" id="RHEA-COMP:12315"/>
        <dbReference type="ChEBI" id="CHEBI:15377"/>
        <dbReference type="ChEBI" id="CHEBI:16044"/>
        <dbReference type="ChEBI" id="CHEBI:29950"/>
        <dbReference type="ChEBI" id="CHEBI:44120"/>
        <dbReference type="ChEBI" id="CHEBI:50058"/>
        <dbReference type="EC" id="1.8.4.11"/>
    </reaction>
</comment>
<comment type="catalytic activity">
    <reaction evidence="1">
        <text>[thioredoxin]-disulfide + L-methionine + H2O = L-methionine (S)-S-oxide + [thioredoxin]-dithiol</text>
        <dbReference type="Rhea" id="RHEA:19993"/>
        <dbReference type="Rhea" id="RHEA-COMP:10698"/>
        <dbReference type="Rhea" id="RHEA-COMP:10700"/>
        <dbReference type="ChEBI" id="CHEBI:15377"/>
        <dbReference type="ChEBI" id="CHEBI:29950"/>
        <dbReference type="ChEBI" id="CHEBI:50058"/>
        <dbReference type="ChEBI" id="CHEBI:57844"/>
        <dbReference type="ChEBI" id="CHEBI:58772"/>
        <dbReference type="EC" id="1.8.4.11"/>
    </reaction>
</comment>
<comment type="similarity">
    <text evidence="1">Belongs to the MsrA Met sulfoxide reductase family.</text>
</comment>